<feature type="chain" id="PRO_0000157770" description="Probable GTP-binding protein EngB">
    <location>
        <begin position="1"/>
        <end position="215"/>
    </location>
</feature>
<feature type="domain" description="EngB-type G" evidence="1">
    <location>
        <begin position="30"/>
        <end position="204"/>
    </location>
</feature>
<feature type="binding site" evidence="1">
    <location>
        <begin position="38"/>
        <end position="45"/>
    </location>
    <ligand>
        <name>GTP</name>
        <dbReference type="ChEBI" id="CHEBI:37565"/>
    </ligand>
</feature>
<feature type="binding site" evidence="1">
    <location>
        <position position="45"/>
    </location>
    <ligand>
        <name>Mg(2+)</name>
        <dbReference type="ChEBI" id="CHEBI:18420"/>
    </ligand>
</feature>
<feature type="binding site" evidence="1">
    <location>
        <begin position="64"/>
        <end position="68"/>
    </location>
    <ligand>
        <name>GTP</name>
        <dbReference type="ChEBI" id="CHEBI:37565"/>
    </ligand>
</feature>
<feature type="binding site" evidence="1">
    <location>
        <position position="66"/>
    </location>
    <ligand>
        <name>Mg(2+)</name>
        <dbReference type="ChEBI" id="CHEBI:18420"/>
    </ligand>
</feature>
<feature type="binding site" evidence="1">
    <location>
        <begin position="82"/>
        <end position="85"/>
    </location>
    <ligand>
        <name>GTP</name>
        <dbReference type="ChEBI" id="CHEBI:37565"/>
    </ligand>
</feature>
<feature type="binding site" evidence="1">
    <location>
        <begin position="149"/>
        <end position="152"/>
    </location>
    <ligand>
        <name>GTP</name>
        <dbReference type="ChEBI" id="CHEBI:37565"/>
    </ligand>
</feature>
<feature type="binding site" evidence="1">
    <location>
        <begin position="182"/>
        <end position="185"/>
    </location>
    <ligand>
        <name>GTP</name>
        <dbReference type="ChEBI" id="CHEBI:37565"/>
    </ligand>
</feature>
<reference key="1">
    <citation type="journal article" date="2000" name="Nature">
        <title>Complete genome sequence of Pseudomonas aeruginosa PAO1, an opportunistic pathogen.</title>
        <authorList>
            <person name="Stover C.K."/>
            <person name="Pham X.-Q.T."/>
            <person name="Erwin A.L."/>
            <person name="Mizoguchi S.D."/>
            <person name="Warrener P."/>
            <person name="Hickey M.J."/>
            <person name="Brinkman F.S.L."/>
            <person name="Hufnagle W.O."/>
            <person name="Kowalik D.J."/>
            <person name="Lagrou M."/>
            <person name="Garber R.L."/>
            <person name="Goltry L."/>
            <person name="Tolentino E."/>
            <person name="Westbrock-Wadman S."/>
            <person name="Yuan Y."/>
            <person name="Brody L.L."/>
            <person name="Coulter S.N."/>
            <person name="Folger K.R."/>
            <person name="Kas A."/>
            <person name="Larbig K."/>
            <person name="Lim R.M."/>
            <person name="Smith K.A."/>
            <person name="Spencer D.H."/>
            <person name="Wong G.K.-S."/>
            <person name="Wu Z."/>
            <person name="Paulsen I.T."/>
            <person name="Reizer J."/>
            <person name="Saier M.H. Jr."/>
            <person name="Hancock R.E.W."/>
            <person name="Lory S."/>
            <person name="Olson M.V."/>
        </authorList>
    </citation>
    <scope>NUCLEOTIDE SEQUENCE [LARGE SCALE GENOMIC DNA]</scope>
    <source>
        <strain>ATCC 15692 / DSM 22644 / CIP 104116 / JCM 14847 / LMG 12228 / 1C / PRS 101 / PAO1</strain>
    </source>
</reference>
<name>ENGB_PSEAE</name>
<protein>
    <recommendedName>
        <fullName evidence="1">Probable GTP-binding protein EngB</fullName>
    </recommendedName>
</protein>
<organism>
    <name type="scientific">Pseudomonas aeruginosa (strain ATCC 15692 / DSM 22644 / CIP 104116 / JCM 14847 / LMG 12228 / 1C / PRS 101 / PAO1)</name>
    <dbReference type="NCBI Taxonomy" id="208964"/>
    <lineage>
        <taxon>Bacteria</taxon>
        <taxon>Pseudomonadati</taxon>
        <taxon>Pseudomonadota</taxon>
        <taxon>Gammaproteobacteria</taxon>
        <taxon>Pseudomonadales</taxon>
        <taxon>Pseudomonadaceae</taxon>
        <taxon>Pseudomonas</taxon>
    </lineage>
</organism>
<gene>
    <name evidence="1" type="primary">engB</name>
    <name type="ordered locus">PA5492</name>
</gene>
<sequence>MSEKNPIVGLCQKASFLISAAQVDQCPPDEGLEVAFAGRSNAGKSSALNTLTHANLARTSKTPGRTQLLNFFALDDSRRLVDLPGYGYAKVPIPLKQHWQRHLEAYLSSRASLAGVFLMMDIRHPLTDFDRLMLDWAQASQLPIHVLMTKADKLAFGAAKNALLKVRREVQQGWGDVATLQLFSAPKRQGVDEAQMVLAQWLGLLDEEQEAFEEA</sequence>
<proteinExistence type="inferred from homology"/>
<accession>Q9HT81</accession>
<keyword id="KW-0131">Cell cycle</keyword>
<keyword id="KW-0132">Cell division</keyword>
<keyword id="KW-0342">GTP-binding</keyword>
<keyword id="KW-0460">Magnesium</keyword>
<keyword id="KW-0479">Metal-binding</keyword>
<keyword id="KW-0547">Nucleotide-binding</keyword>
<keyword id="KW-1185">Reference proteome</keyword>
<keyword id="KW-0717">Septation</keyword>
<dbReference type="EMBL" id="AE004091">
    <property type="protein sequence ID" value="AAG08877.1"/>
    <property type="molecule type" value="Genomic_DNA"/>
</dbReference>
<dbReference type="PIR" id="E82958">
    <property type="entry name" value="E82958"/>
</dbReference>
<dbReference type="RefSeq" id="NP_254179.1">
    <property type="nucleotide sequence ID" value="NC_002516.2"/>
</dbReference>
<dbReference type="SMR" id="Q9HT81"/>
<dbReference type="FunCoup" id="Q9HT81">
    <property type="interactions" value="473"/>
</dbReference>
<dbReference type="STRING" id="208964.PA5492"/>
<dbReference type="PaxDb" id="208964-PA5492"/>
<dbReference type="DNASU" id="877793"/>
<dbReference type="GeneID" id="877793"/>
<dbReference type="KEGG" id="pae:PA5492"/>
<dbReference type="PATRIC" id="fig|208964.12.peg.5757"/>
<dbReference type="PseudoCAP" id="PA5492"/>
<dbReference type="HOGENOM" id="CLU_033732_1_0_6"/>
<dbReference type="InParanoid" id="Q9HT81"/>
<dbReference type="OrthoDB" id="9804921at2"/>
<dbReference type="PhylomeDB" id="Q9HT81"/>
<dbReference type="BioCyc" id="PAER208964:G1FZ6-5619-MONOMER"/>
<dbReference type="Proteomes" id="UP000002438">
    <property type="component" value="Chromosome"/>
</dbReference>
<dbReference type="GO" id="GO:0005829">
    <property type="term" value="C:cytosol"/>
    <property type="evidence" value="ECO:0000318"/>
    <property type="project" value="GO_Central"/>
</dbReference>
<dbReference type="GO" id="GO:0005525">
    <property type="term" value="F:GTP binding"/>
    <property type="evidence" value="ECO:0007669"/>
    <property type="project" value="UniProtKB-UniRule"/>
</dbReference>
<dbReference type="GO" id="GO:0046872">
    <property type="term" value="F:metal ion binding"/>
    <property type="evidence" value="ECO:0007669"/>
    <property type="project" value="UniProtKB-KW"/>
</dbReference>
<dbReference type="GO" id="GO:0000917">
    <property type="term" value="P:division septum assembly"/>
    <property type="evidence" value="ECO:0007669"/>
    <property type="project" value="UniProtKB-KW"/>
</dbReference>
<dbReference type="CDD" id="cd01876">
    <property type="entry name" value="YihA_EngB"/>
    <property type="match status" value="1"/>
</dbReference>
<dbReference type="FunFam" id="3.40.50.300:FF:000098">
    <property type="entry name" value="Probable GTP-binding protein EngB"/>
    <property type="match status" value="1"/>
</dbReference>
<dbReference type="Gene3D" id="3.40.50.300">
    <property type="entry name" value="P-loop containing nucleotide triphosphate hydrolases"/>
    <property type="match status" value="1"/>
</dbReference>
<dbReference type="HAMAP" id="MF_00321">
    <property type="entry name" value="GTPase_EngB"/>
    <property type="match status" value="1"/>
</dbReference>
<dbReference type="InterPro" id="IPR030393">
    <property type="entry name" value="G_ENGB_dom"/>
</dbReference>
<dbReference type="InterPro" id="IPR006073">
    <property type="entry name" value="GTP-bd"/>
</dbReference>
<dbReference type="InterPro" id="IPR019987">
    <property type="entry name" value="GTP-bd_ribosome_bio_YsxC"/>
</dbReference>
<dbReference type="InterPro" id="IPR027417">
    <property type="entry name" value="P-loop_NTPase"/>
</dbReference>
<dbReference type="NCBIfam" id="TIGR03598">
    <property type="entry name" value="GTPase_YsxC"/>
    <property type="match status" value="1"/>
</dbReference>
<dbReference type="PANTHER" id="PTHR11649:SF13">
    <property type="entry name" value="ENGB-TYPE G DOMAIN-CONTAINING PROTEIN"/>
    <property type="match status" value="1"/>
</dbReference>
<dbReference type="PANTHER" id="PTHR11649">
    <property type="entry name" value="MSS1/TRME-RELATED GTP-BINDING PROTEIN"/>
    <property type="match status" value="1"/>
</dbReference>
<dbReference type="Pfam" id="PF01926">
    <property type="entry name" value="MMR_HSR1"/>
    <property type="match status" value="1"/>
</dbReference>
<dbReference type="SUPFAM" id="SSF52540">
    <property type="entry name" value="P-loop containing nucleoside triphosphate hydrolases"/>
    <property type="match status" value="1"/>
</dbReference>
<dbReference type="PROSITE" id="PS51706">
    <property type="entry name" value="G_ENGB"/>
    <property type="match status" value="1"/>
</dbReference>
<evidence type="ECO:0000255" key="1">
    <source>
        <dbReference type="HAMAP-Rule" id="MF_00321"/>
    </source>
</evidence>
<comment type="function">
    <text evidence="1">Necessary for normal cell division and for the maintenance of normal septation.</text>
</comment>
<comment type="cofactor">
    <cofactor evidence="1">
        <name>Mg(2+)</name>
        <dbReference type="ChEBI" id="CHEBI:18420"/>
    </cofactor>
</comment>
<comment type="similarity">
    <text evidence="1">Belongs to the TRAFAC class TrmE-Era-EngA-EngB-Septin-like GTPase superfamily. EngB GTPase family.</text>
</comment>